<name>DYR5_ECOLX</name>
<comment type="function">
    <text evidence="1">Key enzyme in folate metabolism. Catalyzes an essential reaction for de novo glycine and purine synthesis, and for DNA precursor synthesis (By similarity).</text>
</comment>
<comment type="catalytic activity">
    <reaction evidence="2">
        <text>(6S)-5,6,7,8-tetrahydrofolate + NADP(+) = 7,8-dihydrofolate + NADPH + H(+)</text>
        <dbReference type="Rhea" id="RHEA:15009"/>
        <dbReference type="ChEBI" id="CHEBI:15378"/>
        <dbReference type="ChEBI" id="CHEBI:57451"/>
        <dbReference type="ChEBI" id="CHEBI:57453"/>
        <dbReference type="ChEBI" id="CHEBI:57783"/>
        <dbReference type="ChEBI" id="CHEBI:58349"/>
        <dbReference type="EC" id="1.5.1.3"/>
    </reaction>
</comment>
<comment type="pathway">
    <text>Cofactor biosynthesis; tetrahydrofolate biosynthesis; 5,6,7,8-tetrahydrofolate from 7,8-dihydrofolate: step 1/1.</text>
</comment>
<comment type="subunit">
    <text>Homodimer.</text>
</comment>
<comment type="miscellaneous">
    <text>Confers trimethoprim resistance.</text>
</comment>
<comment type="similarity">
    <text evidence="3">Belongs to the dihydrofolate reductase family.</text>
</comment>
<evidence type="ECO:0000250" key="1"/>
<evidence type="ECO:0000255" key="2">
    <source>
        <dbReference type="PROSITE-ProRule" id="PRU00660"/>
    </source>
</evidence>
<evidence type="ECO:0000305" key="3"/>
<evidence type="ECO:0007829" key="4">
    <source>
        <dbReference type="PDB" id="7RGO"/>
    </source>
</evidence>
<geneLocation type="plasmid">
    <name>pLMO20</name>
</geneLocation>
<proteinExistence type="evidence at protein level"/>
<accession>P11731</accession>
<protein>
    <recommendedName>
        <fullName>Dihydrofolate reductase type 5</fullName>
        <ecNumber>1.5.1.3</ecNumber>
    </recommendedName>
    <alternativeName>
        <fullName>Dihydrofolate reductase type V</fullName>
    </alternativeName>
</protein>
<keyword id="KW-0002">3D-structure</keyword>
<keyword id="KW-0046">Antibiotic resistance</keyword>
<keyword id="KW-0487">Methotrexate resistance</keyword>
<keyword id="KW-0521">NADP</keyword>
<keyword id="KW-0554">One-carbon metabolism</keyword>
<keyword id="KW-0560">Oxidoreductase</keyword>
<keyword id="KW-0614">Plasmid</keyword>
<keyword id="KW-0817">Trimethoprim resistance</keyword>
<feature type="chain" id="PRO_0000186422" description="Dihydrofolate reductase type 5">
    <location>
        <begin position="1"/>
        <end position="157"/>
    </location>
</feature>
<feature type="domain" description="DHFR" evidence="2">
    <location>
        <begin position="2"/>
        <end position="156"/>
    </location>
</feature>
<feature type="strand" evidence="4">
    <location>
        <begin position="2"/>
        <end position="10"/>
    </location>
</feature>
<feature type="strand" evidence="4">
    <location>
        <begin position="13"/>
        <end position="17"/>
    </location>
</feature>
<feature type="helix" evidence="4">
    <location>
        <begin position="28"/>
        <end position="36"/>
    </location>
</feature>
<feature type="strand" evidence="4">
    <location>
        <begin position="40"/>
        <end position="44"/>
    </location>
</feature>
<feature type="helix" evidence="4">
    <location>
        <begin position="45"/>
        <end position="51"/>
    </location>
</feature>
<feature type="strand" evidence="4">
    <location>
        <begin position="58"/>
        <end position="62"/>
    </location>
</feature>
<feature type="strand" evidence="4">
    <location>
        <begin position="64"/>
        <end position="66"/>
    </location>
</feature>
<feature type="strand" evidence="4">
    <location>
        <begin position="74"/>
        <end position="79"/>
    </location>
</feature>
<feature type="helix" evidence="4">
    <location>
        <begin position="80"/>
        <end position="90"/>
    </location>
</feature>
<feature type="strand" evidence="4">
    <location>
        <begin position="92"/>
        <end position="98"/>
    </location>
</feature>
<feature type="helix" evidence="4">
    <location>
        <begin position="100"/>
        <end position="106"/>
    </location>
</feature>
<feature type="helix" evidence="4">
    <location>
        <begin position="107"/>
        <end position="109"/>
    </location>
</feature>
<feature type="strand" evidence="4">
    <location>
        <begin position="111"/>
        <end position="119"/>
    </location>
</feature>
<feature type="strand" evidence="4">
    <location>
        <begin position="125"/>
        <end position="127"/>
    </location>
</feature>
<feature type="strand" evidence="4">
    <location>
        <begin position="135"/>
        <end position="143"/>
    </location>
</feature>
<feature type="strand" evidence="4">
    <location>
        <begin position="145"/>
        <end position="147"/>
    </location>
</feature>
<feature type="strand" evidence="4">
    <location>
        <begin position="149"/>
        <end position="156"/>
    </location>
</feature>
<gene>
    <name type="primary">dhfrV</name>
</gene>
<organism>
    <name type="scientific">Escherichia coli</name>
    <dbReference type="NCBI Taxonomy" id="562"/>
    <lineage>
        <taxon>Bacteria</taxon>
        <taxon>Pseudomonadati</taxon>
        <taxon>Pseudomonadota</taxon>
        <taxon>Gammaproteobacteria</taxon>
        <taxon>Enterobacterales</taxon>
        <taxon>Enterobacteriaceae</taxon>
        <taxon>Escherichia</taxon>
    </lineage>
</organism>
<sequence>MKVSLMAAKAKNGVIGCGPHIPWSAKGEQLLFKALTYNQWLLVGRKTFESMGALPNRKYAVVTRSAWTADNDNVIVFPSIEEAMYGLAELTDHVIVSGGGEIYRETLPMASTLHISTIDIEPEGDVFFPNIPNTFEVVFEQHFSSNINYCYQIWQKG</sequence>
<reference key="1">
    <citation type="journal article" date="1988" name="Mol. Gen. Genet.">
        <title>Site-specific recombination promotes linkage between trimethoprim- and sulfonamide resistance genes. Sequence characterization of dhfrV and sulI and a recombination active locus of Tn21.</title>
        <authorList>
            <person name="Sundstroem L."/>
            <person name="Radstroem P."/>
            <person name="Swedberg G."/>
            <person name="Skoeld O."/>
        </authorList>
    </citation>
    <scope>NUCLEOTIDE SEQUENCE [GENOMIC DNA]</scope>
</reference>
<dbReference type="EC" id="1.5.1.3"/>
<dbReference type="EMBL" id="X12868">
    <property type="protein sequence ID" value="CAA31356.1"/>
    <property type="molecule type" value="Genomic_DNA"/>
</dbReference>
<dbReference type="PIR" id="S04810">
    <property type="entry name" value="S04810"/>
</dbReference>
<dbReference type="RefSeq" id="YP_008864016.1">
    <property type="nucleotide sequence ID" value="NC_022992.1"/>
</dbReference>
<dbReference type="RefSeq" id="YP_008864683.1">
    <property type="nucleotide sequence ID" value="NC_022996.1"/>
</dbReference>
<dbReference type="PDB" id="7R6G">
    <property type="method" value="X-ray"/>
    <property type="resolution" value="2.61 A"/>
    <property type="chains" value="A/B=1-157"/>
</dbReference>
<dbReference type="PDB" id="7RGK">
    <property type="method" value="X-ray"/>
    <property type="resolution" value="2.19 A"/>
    <property type="chains" value="A/B=1-157"/>
</dbReference>
<dbReference type="PDB" id="7RGO">
    <property type="method" value="X-ray"/>
    <property type="resolution" value="1.92 A"/>
    <property type="chains" value="A/B=1-157"/>
</dbReference>
<dbReference type="PDBsum" id="7R6G"/>
<dbReference type="PDBsum" id="7RGK"/>
<dbReference type="PDBsum" id="7RGO"/>
<dbReference type="SMR" id="P11731"/>
<dbReference type="CARD" id="ARO:3002861">
    <property type="molecule name" value="dfrA5"/>
    <property type="mechanism identifier" value="ARO:0001002"/>
    <property type="mechanism name" value="antibiotic target replacement"/>
</dbReference>
<dbReference type="KEGG" id="ag:CAA31356"/>
<dbReference type="UniPathway" id="UPA00077">
    <property type="reaction ID" value="UER00158"/>
</dbReference>
<dbReference type="GO" id="GO:0005829">
    <property type="term" value="C:cytosol"/>
    <property type="evidence" value="ECO:0007669"/>
    <property type="project" value="TreeGrafter"/>
</dbReference>
<dbReference type="GO" id="GO:0004146">
    <property type="term" value="F:dihydrofolate reductase activity"/>
    <property type="evidence" value="ECO:0007669"/>
    <property type="project" value="UniProtKB-EC"/>
</dbReference>
<dbReference type="GO" id="GO:0050661">
    <property type="term" value="F:NADP binding"/>
    <property type="evidence" value="ECO:0007669"/>
    <property type="project" value="InterPro"/>
</dbReference>
<dbReference type="GO" id="GO:0046452">
    <property type="term" value="P:dihydrofolate metabolic process"/>
    <property type="evidence" value="ECO:0007669"/>
    <property type="project" value="TreeGrafter"/>
</dbReference>
<dbReference type="GO" id="GO:0046655">
    <property type="term" value="P:folic acid metabolic process"/>
    <property type="evidence" value="ECO:0007669"/>
    <property type="project" value="TreeGrafter"/>
</dbReference>
<dbReference type="GO" id="GO:0006730">
    <property type="term" value="P:one-carbon metabolic process"/>
    <property type="evidence" value="ECO:0007669"/>
    <property type="project" value="UniProtKB-KW"/>
</dbReference>
<dbReference type="GO" id="GO:0046677">
    <property type="term" value="P:response to antibiotic"/>
    <property type="evidence" value="ECO:0007669"/>
    <property type="project" value="UniProtKB-KW"/>
</dbReference>
<dbReference type="GO" id="GO:0031427">
    <property type="term" value="P:response to methotrexate"/>
    <property type="evidence" value="ECO:0007669"/>
    <property type="project" value="UniProtKB-KW"/>
</dbReference>
<dbReference type="GO" id="GO:0046654">
    <property type="term" value="P:tetrahydrofolate biosynthetic process"/>
    <property type="evidence" value="ECO:0007669"/>
    <property type="project" value="UniProtKB-UniPathway"/>
</dbReference>
<dbReference type="CDD" id="cd00209">
    <property type="entry name" value="DHFR"/>
    <property type="match status" value="1"/>
</dbReference>
<dbReference type="Gene3D" id="3.40.430.10">
    <property type="entry name" value="Dihydrofolate Reductase, subunit A"/>
    <property type="match status" value="1"/>
</dbReference>
<dbReference type="InterPro" id="IPR012259">
    <property type="entry name" value="DHFR"/>
</dbReference>
<dbReference type="InterPro" id="IPR024072">
    <property type="entry name" value="DHFR-like_dom_sf"/>
</dbReference>
<dbReference type="InterPro" id="IPR017925">
    <property type="entry name" value="DHFR_CS"/>
</dbReference>
<dbReference type="InterPro" id="IPR001796">
    <property type="entry name" value="DHFR_dom"/>
</dbReference>
<dbReference type="NCBIfam" id="NF000330">
    <property type="entry name" value="trim_DfrA1_like"/>
    <property type="match status" value="1"/>
</dbReference>
<dbReference type="PANTHER" id="PTHR48069">
    <property type="entry name" value="DIHYDROFOLATE REDUCTASE"/>
    <property type="match status" value="1"/>
</dbReference>
<dbReference type="PANTHER" id="PTHR48069:SF3">
    <property type="entry name" value="DIHYDROFOLATE REDUCTASE"/>
    <property type="match status" value="1"/>
</dbReference>
<dbReference type="Pfam" id="PF00186">
    <property type="entry name" value="DHFR_1"/>
    <property type="match status" value="1"/>
</dbReference>
<dbReference type="PRINTS" id="PR00070">
    <property type="entry name" value="DHFR"/>
</dbReference>
<dbReference type="SUPFAM" id="SSF53597">
    <property type="entry name" value="Dihydrofolate reductase-like"/>
    <property type="match status" value="1"/>
</dbReference>
<dbReference type="PROSITE" id="PS00075">
    <property type="entry name" value="DHFR_1"/>
    <property type="match status" value="1"/>
</dbReference>
<dbReference type="PROSITE" id="PS51330">
    <property type="entry name" value="DHFR_2"/>
    <property type="match status" value="1"/>
</dbReference>